<reference key="1">
    <citation type="journal article" date="2004" name="J. Biol. Chem.">
        <title>ADAMTS7B, the full-length product of the ADAMTS7 gene, is a chondroitin sulfate proteoglycan containing a mucin domain.</title>
        <authorList>
            <person name="Somerville R.P.T."/>
            <person name="Longpre J.-M."/>
            <person name="Apel E.D."/>
            <person name="Lewis R.M."/>
            <person name="Wang L.W."/>
            <person name="Sanes J.R."/>
            <person name="Leduc R."/>
            <person name="Apte S.S."/>
        </authorList>
    </citation>
    <scope>NUCLEOTIDE SEQUENCE [MRNA] (ISOFORM 1)</scope>
    <scope>PROTEIN SEQUENCE OF 61-66 AND 221-226</scope>
    <scope>FUNCTION</scope>
    <scope>GLYCOSYLATION</scope>
    <scope>PROTEOLYTIC PROCESSING</scope>
    <scope>SUBCELLULAR LOCATION</scope>
    <source>
        <tissue>Embryo</tissue>
    </source>
</reference>
<reference key="2">
    <citation type="journal article" date="2009" name="PLoS Biol.">
        <title>Lineage-specific biology revealed by a finished genome assembly of the mouse.</title>
        <authorList>
            <person name="Church D.M."/>
            <person name="Goodstadt L."/>
            <person name="Hillier L.W."/>
            <person name="Zody M.C."/>
            <person name="Goldstein S."/>
            <person name="She X."/>
            <person name="Bult C.J."/>
            <person name="Agarwala R."/>
            <person name="Cherry J.L."/>
            <person name="DiCuccio M."/>
            <person name="Hlavina W."/>
            <person name="Kapustin Y."/>
            <person name="Meric P."/>
            <person name="Maglott D."/>
            <person name="Birtle Z."/>
            <person name="Marques A.C."/>
            <person name="Graves T."/>
            <person name="Zhou S."/>
            <person name="Teague B."/>
            <person name="Potamousis K."/>
            <person name="Churas C."/>
            <person name="Place M."/>
            <person name="Herschleb J."/>
            <person name="Runnheim R."/>
            <person name="Forrest D."/>
            <person name="Amos-Landgraf J."/>
            <person name="Schwartz D.C."/>
            <person name="Cheng Z."/>
            <person name="Lindblad-Toh K."/>
            <person name="Eichler E.E."/>
            <person name="Ponting C.P."/>
        </authorList>
    </citation>
    <scope>NUCLEOTIDE SEQUENCE [LARGE SCALE GENOMIC DNA]</scope>
    <source>
        <strain>C57BL/6J</strain>
    </source>
</reference>
<reference key="3">
    <citation type="journal article" date="2004" name="Genome Res.">
        <title>The status, quality, and expansion of the NIH full-length cDNA project: the Mammalian Gene Collection (MGC).</title>
        <authorList>
            <consortium name="The MGC Project Team"/>
        </authorList>
    </citation>
    <scope>NUCLEOTIDE SEQUENCE [LARGE SCALE MRNA] (ISOFORM 2)</scope>
    <source>
        <tissue>Brain</tissue>
    </source>
</reference>
<evidence type="ECO:0000250" key="1"/>
<evidence type="ECO:0000250" key="2">
    <source>
        <dbReference type="UniProtKB" id="Q76LX8"/>
    </source>
</evidence>
<evidence type="ECO:0000250" key="3">
    <source>
        <dbReference type="UniProtKB" id="Q9UKP4"/>
    </source>
</evidence>
<evidence type="ECO:0000255" key="4"/>
<evidence type="ECO:0000255" key="5">
    <source>
        <dbReference type="PROSITE-ProRule" id="PRU00210"/>
    </source>
</evidence>
<evidence type="ECO:0000255" key="6">
    <source>
        <dbReference type="PROSITE-ProRule" id="PRU00233"/>
    </source>
</evidence>
<evidence type="ECO:0000255" key="7">
    <source>
        <dbReference type="PROSITE-ProRule" id="PRU00276"/>
    </source>
</evidence>
<evidence type="ECO:0000255" key="8">
    <source>
        <dbReference type="PROSITE-ProRule" id="PRU10095"/>
    </source>
</evidence>
<evidence type="ECO:0000256" key="9">
    <source>
        <dbReference type="SAM" id="MobiDB-lite"/>
    </source>
</evidence>
<evidence type="ECO:0000269" key="10">
    <source>
    </source>
</evidence>
<evidence type="ECO:0000303" key="11">
    <source>
    </source>
</evidence>
<evidence type="ECO:0000305" key="12"/>
<sequence length="1657" mass="182313">MHRGPSLLLILCALASRVLGPASGLVTEGRAGLDIVHPVRVDAGGSFLSYELWPRVLRKRDVSTTQASSAFYQLQYQGRELLFNLTTNPYLMAPGFVSEIRRHSTLGHAHIQTSVPTCHLLGDVQDPELEGGFAAISACDGLRGVFQLSNEDYFIEPLDGVSAQPGHAQPHVVYKHQGSRKQAQQGDSRPSGTCGMQVPPDLEQQREHWEQQQQKRRQQRSVSKEKWVETLVVADSKMVEYHGQPQVESYVLTIMNMVAGLFHDPSIGNPIHISIVRLIILEDEEKDLKITHHAEETLKNFCRWQKNINIKGDDHPQHHDTAILLTRKDLCASMNQPCETLGLSHVSGLCHPQLSCSVSEDTGMPLAFTVAHELGHSFGIQHDGTGNDCESIGKRPFIMSPQLLYDRGIPLTWSRCSREYITRFLDRGWGLCLDDRPSKDVIALPSVLPGVLYDVNHQCRLQYGSHSAYCEDMDDVCHTLWCSVGTTCHSKLDAAVDGTSCGKNKWCLKGECVPEGFQPEAVDGGWSGWSAWSDCSRSCGVGVRSSERQCTQPVPKNRGKYCVGERKRSQLCNLPACPPDRPSFRHTQCSQFDGMLYKGKLHKWVPVPNDDNPCELHCRPSNSSNTEKLRDAVVDGTPCYQSRISRDICLNGICKNVGCDFVIDSGAEEDRCGVCRGDGSTCQTVSRTFKETEGQGYVDIGLIPAGAREILIEEVAEAANFLALRSEDPDKYFLNGGWTIQWNGDYRVAGTTFTYARKGNWENLTSPGPTSEPVWIQLLFQEKNPGVHYQYTIQRDSHDQVRPPEFSWHYGPWSKCTVTCGTGVQRQSLYCMERQAGVVAEEYCNTLNRPDERQRKCSEEPCPPRWWAGEWQPCSRSCGPEGLSRRAVFCIRSMGLDEQRALELSACEHLPRPLAETPCNRHVICPSTWGVGNWSQCSVTCGAGIRQRSVLCINNTDVPCDEAERPITETFCFLQPCQYPMYIVDTGASGSGSSSPELFNEVDFIPNQLAPRPSPASSPKPVSISNAIDEEELDPPGPVFVDDFYYDYNFINFHEDLSYGSFEEPHPDLVDNGGWTAPPHIRPTESPSDTPVPTAGALGAEAEDIQGSWSPSPLLSEASYSPPGLEQTSINPLANFLTEEDTPMGAPELGFPSLPWPPASVDDMMTPVGPGNPDELLVKEDEQSPPSTPWSDRNKLSTDGNPLGHTSPALPQSPIPTQPSPPSISPTQASPSPDVVEVSTGWNAAWDPVLEADLKPGHGELPSTVEVASPPLLPMATVPGIWGRDSPLEPGTPTFSSPELSSQHLKTLTMPGTLLLTVPTDLRSPGPSGQPQTPNLEGTQSPGLLPTPARETQTNSSKDPEVQPLQPSLEEDGDPADPLPARNASWQVGNWSQCSTTCGLGAIWRLVSCSSGNDEDCTLASRPQPARHCHLRPCAAWRTGNWSKCSRNCGGGSSTRDVQCVDTRDLRPLRPFHCQPGPTKPPNRQLCGTQPCLPWYTSSWRECSEACGGGEQQRLVTCPEPGLCEESLRPNNSRPCNTHPCTQWVVGPWGQCSAPCGGGVQRRLVRCVNTQTGLAEEDSDLCSHEAWPESSRPCATEDCELVEPPRCERDRLSFNFCETLRLLGRCQLPTIRAQCCRSCPPLSRGVPSRGHQRVARR</sequence>
<gene>
    <name type="primary">Adamts7</name>
</gene>
<keyword id="KW-0025">Alternative splicing</keyword>
<keyword id="KW-0165">Cleavage on pair of basic residues</keyword>
<keyword id="KW-0903">Direct protein sequencing</keyword>
<keyword id="KW-1015">Disulfide bond</keyword>
<keyword id="KW-0272">Extracellular matrix</keyword>
<keyword id="KW-0325">Glycoprotein</keyword>
<keyword id="KW-0378">Hydrolase</keyword>
<keyword id="KW-0479">Metal-binding</keyword>
<keyword id="KW-0482">Metalloprotease</keyword>
<keyword id="KW-0645">Protease</keyword>
<keyword id="KW-0654">Proteoglycan</keyword>
<keyword id="KW-1185">Reference proteome</keyword>
<keyword id="KW-0677">Repeat</keyword>
<keyword id="KW-0964">Secreted</keyword>
<keyword id="KW-0732">Signal</keyword>
<keyword id="KW-0862">Zinc</keyword>
<keyword id="KW-0865">Zymogen</keyword>
<proteinExistence type="evidence at protein level"/>
<dbReference type="EC" id="3.4.24.-"/>
<dbReference type="EMBL" id="AY551090">
    <property type="protein sequence ID" value="AAT36307.1"/>
    <property type="molecule type" value="mRNA"/>
</dbReference>
<dbReference type="EMBL" id="AC140392">
    <property type="status" value="NOT_ANNOTATED_CDS"/>
    <property type="molecule type" value="Genomic_DNA"/>
</dbReference>
<dbReference type="EMBL" id="AC151735">
    <property type="status" value="NOT_ANNOTATED_CDS"/>
    <property type="molecule type" value="Genomic_DNA"/>
</dbReference>
<dbReference type="EMBL" id="BC141173">
    <property type="protein sequence ID" value="AAI41174.1"/>
    <property type="molecule type" value="mRNA"/>
</dbReference>
<dbReference type="CCDS" id="CCDS40724.1">
    <molecule id="Q68SA9-2"/>
</dbReference>
<dbReference type="CCDS" id="CCDS85708.1">
    <molecule id="Q68SA9-1"/>
</dbReference>
<dbReference type="RefSeq" id="NP_001003911.2">
    <molecule id="Q68SA9-2"/>
    <property type="nucleotide sequence ID" value="NM_001003911.2"/>
</dbReference>
<dbReference type="RefSeq" id="NP_001313280.1">
    <molecule id="Q68SA9-1"/>
    <property type="nucleotide sequence ID" value="NM_001326351.1"/>
</dbReference>
<dbReference type="SMR" id="Q68SA9"/>
<dbReference type="BioGRID" id="223868">
    <property type="interactions" value="2"/>
</dbReference>
<dbReference type="FunCoup" id="Q68SA9">
    <property type="interactions" value="85"/>
</dbReference>
<dbReference type="IntAct" id="Q68SA9">
    <property type="interactions" value="1"/>
</dbReference>
<dbReference type="STRING" id="10090.ENSMUSP00000108682"/>
<dbReference type="MEROPS" id="M12.231"/>
<dbReference type="GlyCosmos" id="Q68SA9">
    <property type="glycosylation" value="2 sites, No reported glycans"/>
</dbReference>
<dbReference type="GlyGen" id="Q68SA9">
    <property type="glycosylation" value="7 sites"/>
</dbReference>
<dbReference type="iPTMnet" id="Q68SA9"/>
<dbReference type="PhosphoSitePlus" id="Q68SA9"/>
<dbReference type="PaxDb" id="10090-ENSMUSP00000108682"/>
<dbReference type="Antibodypedia" id="27710">
    <property type="antibodies" value="173 antibodies from 21 providers"/>
</dbReference>
<dbReference type="DNASU" id="108153"/>
<dbReference type="Ensembl" id="ENSMUST00000113059.8">
    <molecule id="Q68SA9-1"/>
    <property type="protein sequence ID" value="ENSMUSP00000108682.2"/>
    <property type="gene ID" value="ENSMUSG00000032363.16"/>
</dbReference>
<dbReference type="Ensembl" id="ENSMUST00000113060.3">
    <molecule id="Q68SA9-2"/>
    <property type="protein sequence ID" value="ENSMUSP00000108683.2"/>
    <property type="gene ID" value="ENSMUSG00000032363.16"/>
</dbReference>
<dbReference type="GeneID" id="108153"/>
<dbReference type="KEGG" id="mmu:108153"/>
<dbReference type="UCSC" id="uc009raa.1">
    <molecule id="Q68SA9-1"/>
    <property type="organism name" value="mouse"/>
</dbReference>
<dbReference type="UCSC" id="uc009rab.1">
    <molecule id="Q68SA9-2"/>
    <property type="organism name" value="mouse"/>
</dbReference>
<dbReference type="AGR" id="MGI:1347346"/>
<dbReference type="CTD" id="11173"/>
<dbReference type="MGI" id="MGI:1347346">
    <property type="gene designation" value="Adamts7"/>
</dbReference>
<dbReference type="VEuPathDB" id="HostDB:ENSMUSG00000032363"/>
<dbReference type="eggNOG" id="KOG3538">
    <property type="taxonomic scope" value="Eukaryota"/>
</dbReference>
<dbReference type="GeneTree" id="ENSGT00940000159819"/>
<dbReference type="InParanoid" id="Q68SA9"/>
<dbReference type="OMA" id="YCSERQA"/>
<dbReference type="OrthoDB" id="412680at2759"/>
<dbReference type="PhylomeDB" id="Q68SA9"/>
<dbReference type="TreeFam" id="TF313537"/>
<dbReference type="Reactome" id="R-MMU-5173214">
    <property type="pathway name" value="O-glycosylation of TSR domain-containing proteins"/>
</dbReference>
<dbReference type="BioGRID-ORCS" id="108153">
    <property type="hits" value="0 hits in 63 CRISPR screens"/>
</dbReference>
<dbReference type="ChiTaRS" id="Adamts7">
    <property type="organism name" value="mouse"/>
</dbReference>
<dbReference type="PRO" id="PR:Q68SA9"/>
<dbReference type="Proteomes" id="UP000000589">
    <property type="component" value="Chromosome 9"/>
</dbReference>
<dbReference type="RNAct" id="Q68SA9">
    <property type="molecule type" value="protein"/>
</dbReference>
<dbReference type="Bgee" id="ENSMUSG00000032363">
    <property type="expression patterns" value="Expressed in ectoplacental cone and 115 other cell types or tissues"/>
</dbReference>
<dbReference type="ExpressionAtlas" id="Q68SA9">
    <property type="expression patterns" value="baseline and differential"/>
</dbReference>
<dbReference type="GO" id="GO:0009986">
    <property type="term" value="C:cell surface"/>
    <property type="evidence" value="ECO:0000314"/>
    <property type="project" value="MGI"/>
</dbReference>
<dbReference type="GO" id="GO:0031012">
    <property type="term" value="C:extracellular matrix"/>
    <property type="evidence" value="ECO:0000314"/>
    <property type="project" value="UniProtKB"/>
</dbReference>
<dbReference type="GO" id="GO:0005576">
    <property type="term" value="C:extracellular region"/>
    <property type="evidence" value="ECO:0007669"/>
    <property type="project" value="UniProtKB-KW"/>
</dbReference>
<dbReference type="GO" id="GO:0046872">
    <property type="term" value="F:metal ion binding"/>
    <property type="evidence" value="ECO:0007669"/>
    <property type="project" value="UniProtKB-KW"/>
</dbReference>
<dbReference type="GO" id="GO:0004222">
    <property type="term" value="F:metalloendopeptidase activity"/>
    <property type="evidence" value="ECO:0007669"/>
    <property type="project" value="Ensembl"/>
</dbReference>
<dbReference type="GO" id="GO:0008237">
    <property type="term" value="F:metallopeptidase activity"/>
    <property type="evidence" value="ECO:0000314"/>
    <property type="project" value="MGI"/>
</dbReference>
<dbReference type="GO" id="GO:0071773">
    <property type="term" value="P:cellular response to BMP stimulus"/>
    <property type="evidence" value="ECO:0007669"/>
    <property type="project" value="Ensembl"/>
</dbReference>
<dbReference type="GO" id="GO:0071347">
    <property type="term" value="P:cellular response to interleukin-1"/>
    <property type="evidence" value="ECO:0007669"/>
    <property type="project" value="Ensembl"/>
</dbReference>
<dbReference type="GO" id="GO:0071356">
    <property type="term" value="P:cellular response to tumor necrosis factor"/>
    <property type="evidence" value="ECO:0007669"/>
    <property type="project" value="Ensembl"/>
</dbReference>
<dbReference type="GO" id="GO:0002062">
    <property type="term" value="P:chondrocyte differentiation"/>
    <property type="evidence" value="ECO:0000316"/>
    <property type="project" value="MGI"/>
</dbReference>
<dbReference type="GO" id="GO:0030199">
    <property type="term" value="P:collagen fibril organization"/>
    <property type="evidence" value="ECO:0000316"/>
    <property type="project" value="MGI"/>
</dbReference>
<dbReference type="GO" id="GO:0032331">
    <property type="term" value="P:negative regulation of chondrocyte differentiation"/>
    <property type="evidence" value="ECO:0007669"/>
    <property type="project" value="Ensembl"/>
</dbReference>
<dbReference type="GO" id="GO:0001503">
    <property type="term" value="P:ossification"/>
    <property type="evidence" value="ECO:0000316"/>
    <property type="project" value="MGI"/>
</dbReference>
<dbReference type="GO" id="GO:0043931">
    <property type="term" value="P:ossification involved in bone maturation"/>
    <property type="evidence" value="ECO:0000316"/>
    <property type="project" value="MGI"/>
</dbReference>
<dbReference type="GO" id="GO:0006029">
    <property type="term" value="P:proteoglycan metabolic process"/>
    <property type="evidence" value="ECO:0000316"/>
    <property type="project" value="MGI"/>
</dbReference>
<dbReference type="GO" id="GO:0006508">
    <property type="term" value="P:proteolysis"/>
    <property type="evidence" value="ECO:0000314"/>
    <property type="project" value="MGI"/>
</dbReference>
<dbReference type="GO" id="GO:0051603">
    <property type="term" value="P:proteolysis involved in protein catabolic process"/>
    <property type="evidence" value="ECO:0007669"/>
    <property type="project" value="Ensembl"/>
</dbReference>
<dbReference type="CDD" id="cd04273">
    <property type="entry name" value="ZnMc_ADAMTS_like"/>
    <property type="match status" value="1"/>
</dbReference>
<dbReference type="FunFam" id="2.60.120.830:FF:000001">
    <property type="entry name" value="A disintegrin and metalloproteinase with thrombospondin motifs 1"/>
    <property type="match status" value="1"/>
</dbReference>
<dbReference type="FunFam" id="3.40.390.10:FF:000001">
    <property type="entry name" value="A disintegrin and metalloproteinase with thrombospondin motifs 1"/>
    <property type="match status" value="1"/>
</dbReference>
<dbReference type="FunFam" id="3.40.1620.60:FF:000004">
    <property type="entry name" value="A disintegrin and metalloproteinase with thrombospondin motifs 12"/>
    <property type="match status" value="1"/>
</dbReference>
<dbReference type="FunFam" id="2.20.100.10:FF:000098">
    <property type="entry name" value="A disintegrin and metalloproteinase with thrombospondin motifs 7"/>
    <property type="match status" value="1"/>
</dbReference>
<dbReference type="FunFam" id="2.20.100.10:FF:000005">
    <property type="entry name" value="ADAM metallopeptidase with thrombospondin type 1 motif 9"/>
    <property type="match status" value="3"/>
</dbReference>
<dbReference type="FunFam" id="2.20.100.10:FF:000001">
    <property type="entry name" value="semaphorin-5A isoform X1"/>
    <property type="match status" value="1"/>
</dbReference>
<dbReference type="Gene3D" id="2.60.120.830">
    <property type="match status" value="1"/>
</dbReference>
<dbReference type="Gene3D" id="3.40.1620.60">
    <property type="match status" value="1"/>
</dbReference>
<dbReference type="Gene3D" id="3.40.390.10">
    <property type="entry name" value="Collagenase (Catalytic Domain)"/>
    <property type="match status" value="1"/>
</dbReference>
<dbReference type="Gene3D" id="2.20.100.10">
    <property type="entry name" value="Thrombospondin type-1 (TSP1) repeat"/>
    <property type="match status" value="8"/>
</dbReference>
<dbReference type="InterPro" id="IPR006586">
    <property type="entry name" value="ADAM_Cys-rich"/>
</dbReference>
<dbReference type="InterPro" id="IPR013273">
    <property type="entry name" value="ADAMTS/ADAMTS-like"/>
</dbReference>
<dbReference type="InterPro" id="IPR050439">
    <property type="entry name" value="ADAMTS_ADAMTS-like"/>
</dbReference>
<dbReference type="InterPro" id="IPR041645">
    <property type="entry name" value="ADAMTS_CR_2"/>
</dbReference>
<dbReference type="InterPro" id="IPR045371">
    <property type="entry name" value="ADAMTS_CR_3"/>
</dbReference>
<dbReference type="InterPro" id="IPR010294">
    <property type="entry name" value="ADAMTS_spacer1"/>
</dbReference>
<dbReference type="InterPro" id="IPR024079">
    <property type="entry name" value="MetalloPept_cat_dom_sf"/>
</dbReference>
<dbReference type="InterPro" id="IPR001590">
    <property type="entry name" value="Peptidase_M12B"/>
</dbReference>
<dbReference type="InterPro" id="IPR002870">
    <property type="entry name" value="Peptidase_M12B_N"/>
</dbReference>
<dbReference type="InterPro" id="IPR010909">
    <property type="entry name" value="PLAC"/>
</dbReference>
<dbReference type="InterPro" id="IPR000884">
    <property type="entry name" value="TSP1_rpt"/>
</dbReference>
<dbReference type="InterPro" id="IPR036383">
    <property type="entry name" value="TSP1_rpt_sf"/>
</dbReference>
<dbReference type="PANTHER" id="PTHR13723:SF142">
    <property type="entry name" value="A DISINTEGRIN AND METALLOPROTEINASE WITH THROMBOSPONDIN MOTIFS 7"/>
    <property type="match status" value="1"/>
</dbReference>
<dbReference type="PANTHER" id="PTHR13723">
    <property type="entry name" value="ADAMTS A DISINTEGRIN AND METALLOPROTEASE WITH THROMBOSPONDIN MOTIFS PROTEASE"/>
    <property type="match status" value="1"/>
</dbReference>
<dbReference type="Pfam" id="PF17771">
    <property type="entry name" value="ADAMTS_CR_2"/>
    <property type="match status" value="1"/>
</dbReference>
<dbReference type="Pfam" id="PF19236">
    <property type="entry name" value="ADAMTS_CR_3"/>
    <property type="match status" value="1"/>
</dbReference>
<dbReference type="Pfam" id="PF05986">
    <property type="entry name" value="ADAMTS_spacer1"/>
    <property type="match status" value="1"/>
</dbReference>
<dbReference type="Pfam" id="PF01562">
    <property type="entry name" value="Pep_M12B_propep"/>
    <property type="match status" value="1"/>
</dbReference>
<dbReference type="Pfam" id="PF01421">
    <property type="entry name" value="Reprolysin"/>
    <property type="match status" value="1"/>
</dbReference>
<dbReference type="Pfam" id="PF19030">
    <property type="entry name" value="TSP1_ADAMTS"/>
    <property type="match status" value="7"/>
</dbReference>
<dbReference type="Pfam" id="PF00090">
    <property type="entry name" value="TSP_1"/>
    <property type="match status" value="1"/>
</dbReference>
<dbReference type="PRINTS" id="PR01857">
    <property type="entry name" value="ADAMTSFAMILY"/>
</dbReference>
<dbReference type="SMART" id="SM00608">
    <property type="entry name" value="ACR"/>
    <property type="match status" value="1"/>
</dbReference>
<dbReference type="SMART" id="SM00209">
    <property type="entry name" value="TSP1"/>
    <property type="match status" value="8"/>
</dbReference>
<dbReference type="SUPFAM" id="SSF55486">
    <property type="entry name" value="Metalloproteases ('zincins'), catalytic domain"/>
    <property type="match status" value="1"/>
</dbReference>
<dbReference type="SUPFAM" id="SSF82895">
    <property type="entry name" value="TSP-1 type 1 repeat"/>
    <property type="match status" value="8"/>
</dbReference>
<dbReference type="PROSITE" id="PS50215">
    <property type="entry name" value="ADAM_MEPRO"/>
    <property type="match status" value="1"/>
</dbReference>
<dbReference type="PROSITE" id="PS50900">
    <property type="entry name" value="PLAC"/>
    <property type="match status" value="1"/>
</dbReference>
<dbReference type="PROSITE" id="PS50092">
    <property type="entry name" value="TSP1"/>
    <property type="match status" value="6"/>
</dbReference>
<dbReference type="PROSITE" id="PS00142">
    <property type="entry name" value="ZINC_PROTEASE"/>
    <property type="match status" value="1"/>
</dbReference>
<name>ATS7_MOUSE</name>
<accession>Q68SA9</accession>
<accession>B2RUI8</accession>
<accession>E9QMY0</accession>
<organism>
    <name type="scientific">Mus musculus</name>
    <name type="common">Mouse</name>
    <dbReference type="NCBI Taxonomy" id="10090"/>
    <lineage>
        <taxon>Eukaryota</taxon>
        <taxon>Metazoa</taxon>
        <taxon>Chordata</taxon>
        <taxon>Craniata</taxon>
        <taxon>Vertebrata</taxon>
        <taxon>Euteleostomi</taxon>
        <taxon>Mammalia</taxon>
        <taxon>Eutheria</taxon>
        <taxon>Euarchontoglires</taxon>
        <taxon>Glires</taxon>
        <taxon>Rodentia</taxon>
        <taxon>Myomorpha</taxon>
        <taxon>Muroidea</taxon>
        <taxon>Muridae</taxon>
        <taxon>Murinae</taxon>
        <taxon>Mus</taxon>
        <taxon>Mus</taxon>
    </lineage>
</organism>
<comment type="function">
    <text evidence="3 10">Metalloprotease (PubMed:15192113). Was previously shown to degrade COMP (By similarity). However, a later study found no activity against COMP (By similarity).</text>
</comment>
<comment type="cofactor">
    <cofactor evidence="1">
        <name>Zn(2+)</name>
        <dbReference type="ChEBI" id="CHEBI:29105"/>
    </cofactor>
    <text evidence="1">Binds 1 zinc ion per subunit.</text>
</comment>
<comment type="subunit">
    <text evidence="3">Interacts with COMP.</text>
</comment>
<comment type="subcellular location">
    <subcellularLocation>
        <location evidence="10">Secreted</location>
        <location evidence="10">Extracellular space</location>
        <location evidence="10">Extracellular matrix</location>
    </subcellularLocation>
    <text evidence="10">Also found associated with the external cell surface.</text>
</comment>
<comment type="alternative products">
    <event type="alternative splicing"/>
    <isoform>
        <id>Q68SA9-1</id>
        <name>1</name>
        <sequence type="displayed"/>
    </isoform>
    <isoform>
        <id>Q68SA9-2</id>
        <name>2</name>
        <sequence type="described" ref="VSP_035113"/>
    </isoform>
</comment>
<comment type="domain">
    <text evidence="1">The spacer domain and the TSP type-1 domains are important for a tight interaction with the extracellular matrix.</text>
</comment>
<comment type="domain">
    <text evidence="1">The conserved cysteine present in the cysteine-switch motif binds the catalytic zinc ion, thus inhibiting the enzyme. The dissociation of the cysteine from the zinc ion upon the activation-peptide release activates the enzyme (By similarity).</text>
</comment>
<comment type="PTM">
    <text evidence="2">N-glycosylated. Can be O-fucosylated by POFUT2 on a serine or a threonine residue found within the consensus sequence C1-X(2)-(S/T)-C2-G of the TSP type-1 repeat domains where C1 and C2 are the first and second cysteine residue of the repeat, respectively. Fucosylated repeats can then be further glycosylated by the addition of a beta-1,3-glucose residue by the glucosyltransferase, B3GALTL. Fucosylation mediates the efficient secretion of ADAMTS family members. Can also be C-glycosylated with one or two mannose molecules on tryptophan residues within the consensus sequence W-X-X-W of the TPRs. N- and C-glycosylations can also facilitate secretion.</text>
</comment>
<comment type="PTM">
    <text evidence="10">O-glycosylated proteoglycan; contains chondroitin sulfate.</text>
</comment>
<comment type="PTM">
    <text evidence="3 10">May be cleaved by a furin endopeptidase (PubMed:15192113). The precursor is sequentially processed (By similarity).</text>
</comment>
<protein>
    <recommendedName>
        <fullName>A disintegrin and metalloproteinase with thrombospondin motifs 7</fullName>
        <shortName>ADAM-TS 7</shortName>
        <shortName>ADAM-TS7</shortName>
        <shortName>ADAMTS-7</shortName>
        <ecNumber>3.4.24.-</ecNumber>
    </recommendedName>
</protein>
<feature type="signal peptide" evidence="4">
    <location>
        <begin position="1"/>
        <end position="20"/>
    </location>
</feature>
<feature type="propeptide" id="PRO_0000348234" evidence="10">
    <location>
        <begin position="21"/>
        <end position="220"/>
    </location>
</feature>
<feature type="chain" id="PRO_0000348235" description="A disintegrin and metalloproteinase with thrombospondin motifs 7">
    <location>
        <begin position="221"/>
        <end position="1657"/>
    </location>
</feature>
<feature type="domain" description="Peptidase M12B" evidence="7">
    <location>
        <begin position="226"/>
        <end position="437"/>
    </location>
</feature>
<feature type="domain" description="Disintegrin">
    <location>
        <begin position="447"/>
        <end position="522"/>
    </location>
</feature>
<feature type="domain" description="TSP type-1 1" evidence="5">
    <location>
        <begin position="523"/>
        <end position="578"/>
    </location>
</feature>
<feature type="domain" description="TSP type-1 2" evidence="5">
    <location>
        <begin position="804"/>
        <end position="863"/>
    </location>
</feature>
<feature type="domain" description="TSP type-1 3" evidence="5">
    <location>
        <begin position="864"/>
        <end position="923"/>
    </location>
</feature>
<feature type="domain" description="TSP type-1 4" evidence="5">
    <location>
        <begin position="925"/>
        <end position="978"/>
    </location>
</feature>
<feature type="domain" description="TSP type-1 5" evidence="5">
    <location>
        <begin position="1366"/>
        <end position="1414"/>
    </location>
</feature>
<feature type="domain" description="TSP type-1 6" evidence="5">
    <location>
        <begin position="1417"/>
        <end position="1477"/>
    </location>
</feature>
<feature type="domain" description="TSP type-1 7" evidence="5">
    <location>
        <begin position="1479"/>
        <end position="1522"/>
    </location>
</feature>
<feature type="domain" description="TSP type-1 8" evidence="5">
    <location>
        <begin position="1524"/>
        <end position="1584"/>
    </location>
</feature>
<feature type="domain" description="PLAC" evidence="6">
    <location>
        <begin position="1587"/>
        <end position="1627"/>
    </location>
</feature>
<feature type="region of interest" description="Disordered" evidence="9">
    <location>
        <begin position="165"/>
        <end position="221"/>
    </location>
</feature>
<feature type="region of interest" description="Spacer">
    <location>
        <begin position="683"/>
        <end position="794"/>
    </location>
</feature>
<feature type="region of interest" description="Disordered" evidence="9">
    <location>
        <begin position="1009"/>
        <end position="1034"/>
    </location>
</feature>
<feature type="region of interest" description="Disordered" evidence="9">
    <location>
        <begin position="1073"/>
        <end position="1127"/>
    </location>
</feature>
<feature type="region of interest" description="Disordered" evidence="9">
    <location>
        <begin position="1140"/>
        <end position="1237"/>
    </location>
</feature>
<feature type="region of interest" description="Disordered" evidence="9">
    <location>
        <begin position="1283"/>
        <end position="1304"/>
    </location>
</feature>
<feature type="region of interest" description="Disordered" evidence="9">
    <location>
        <begin position="1317"/>
        <end position="1384"/>
    </location>
</feature>
<feature type="short sequence motif" description="Cysteine switch" evidence="1">
    <location>
        <begin position="192"/>
        <end position="199"/>
    </location>
</feature>
<feature type="compositionally biased region" description="Polar residues" evidence="9">
    <location>
        <begin position="180"/>
        <end position="191"/>
    </location>
</feature>
<feature type="compositionally biased region" description="Pro residues" evidence="9">
    <location>
        <begin position="1211"/>
        <end position="1224"/>
    </location>
</feature>
<feature type="compositionally biased region" description="Polar residues" evidence="9">
    <location>
        <begin position="1293"/>
        <end position="1304"/>
    </location>
</feature>
<feature type="compositionally biased region" description="Polar residues" evidence="9">
    <location>
        <begin position="1327"/>
        <end position="1342"/>
    </location>
</feature>
<feature type="active site" evidence="7 8">
    <location>
        <position position="373"/>
    </location>
</feature>
<feature type="binding site" description="in inhibited form" evidence="1">
    <location>
        <position position="194"/>
    </location>
    <ligand>
        <name>Zn(2+)</name>
        <dbReference type="ChEBI" id="CHEBI:29105"/>
        <note>catalytic</note>
    </ligand>
</feature>
<feature type="binding site" evidence="1">
    <location>
        <position position="372"/>
    </location>
    <ligand>
        <name>Zn(2+)</name>
        <dbReference type="ChEBI" id="CHEBI:29105"/>
        <note>catalytic</note>
    </ligand>
</feature>
<feature type="binding site" evidence="1">
    <location>
        <position position="376"/>
    </location>
    <ligand>
        <name>Zn(2+)</name>
        <dbReference type="ChEBI" id="CHEBI:29105"/>
        <note>catalytic</note>
    </ligand>
</feature>
<feature type="binding site" evidence="1">
    <location>
        <position position="382"/>
    </location>
    <ligand>
        <name>Zn(2+)</name>
        <dbReference type="ChEBI" id="CHEBI:29105"/>
        <note>catalytic</note>
    </ligand>
</feature>
<feature type="glycosylation site" description="N-linked (GlcNAc...) asparagine" evidence="4">
    <location>
        <position position="84"/>
    </location>
</feature>
<feature type="glycosylation site" description="N-linked (GlcNAc...) asparagine" evidence="4">
    <location>
        <position position="622"/>
    </location>
</feature>
<feature type="disulfide bond" evidence="1">
    <location>
        <begin position="302"/>
        <end position="356"/>
    </location>
</feature>
<feature type="disulfide bond" evidence="1">
    <location>
        <begin position="331"/>
        <end position="338"/>
    </location>
</feature>
<feature type="disulfide bond" evidence="1">
    <location>
        <begin position="350"/>
        <end position="432"/>
    </location>
</feature>
<feature type="disulfide bond" evidence="1">
    <location>
        <begin position="389"/>
        <end position="416"/>
    </location>
</feature>
<feature type="disulfide bond" evidence="1">
    <location>
        <begin position="459"/>
        <end position="482"/>
    </location>
</feature>
<feature type="disulfide bond" evidence="1">
    <location>
        <begin position="470"/>
        <end position="488"/>
    </location>
</feature>
<feature type="disulfide bond" evidence="1">
    <location>
        <begin position="477"/>
        <end position="507"/>
    </location>
</feature>
<feature type="disulfide bond" evidence="1">
    <location>
        <begin position="501"/>
        <end position="512"/>
    </location>
</feature>
<feature type="disulfide bond" evidence="1">
    <location>
        <begin position="535"/>
        <end position="572"/>
    </location>
</feature>
<feature type="disulfide bond" evidence="1">
    <location>
        <begin position="539"/>
        <end position="577"/>
    </location>
</feature>
<feature type="disulfide bond" evidence="1">
    <location>
        <begin position="550"/>
        <end position="562"/>
    </location>
</feature>
<feature type="splice variant" id="VSP_035113" description="In isoform 2." evidence="11">
    <location>
        <begin position="936"/>
        <end position="977"/>
    </location>
</feature>
<feature type="sequence conflict" description="In Ref. 1; AAT36307." evidence="12" ref="1">
    <original>K</original>
    <variation>N</variation>
    <location>
        <position position="600"/>
    </location>
</feature>
<feature type="sequence conflict" description="In Ref. 1; AAT36307 and 3; AAI41174." evidence="12" ref="1 3">
    <original>G</original>
    <variation>V</variation>
    <location>
        <position position="1124"/>
    </location>
</feature>
<feature type="sequence conflict" description="In Ref. 1; AAT36307 and 3; AAI41174." evidence="12" ref="1 3">
    <original>A</original>
    <variation>V</variation>
    <location>
        <position position="1244"/>
    </location>
</feature>
<feature type="sequence conflict" description="In Ref. 1; AAT36307." evidence="12" ref="1">
    <original>GTLLLTVPTDLRSPGPSGQPQT</original>
    <variation>VAGPMV</variation>
    <location>
        <begin position="1312"/>
        <end position="1333"/>
    </location>
</feature>